<name>TPF_PELSA</name>
<proteinExistence type="evidence at protein level"/>
<feature type="signal peptide" evidence="1">
    <location>
        <begin position="1" status="less than"/>
        <end position="10"/>
    </location>
</feature>
<feature type="propeptide" id="PRO_0000450304" evidence="6">
    <location>
        <begin position="11"/>
        <end position="35"/>
    </location>
</feature>
<feature type="peptide" id="PRO_0000450305" description="Temporin-SHf" evidence="2">
    <location>
        <begin position="36"/>
        <end position="43"/>
    </location>
</feature>
<feature type="modified residue" description="Phenylalanine amide" evidence="2">
    <location>
        <position position="43"/>
    </location>
</feature>
<feature type="mutagenesis site" description="In TetraF2W-RR; important increase in activity against both Gram-positive (including MRSA) and Gram-negative bacteria; when associated with W-37; W-38; R-40 and W-43." evidence="4">
    <original>F</original>
    <variation>W</variation>
    <location>
        <position position="36"/>
    </location>
</feature>
<feature type="mutagenesis site" description="In TetraF2W-RR; important increase in activity against both Gram-positive (including MRSA) and Gram-negative bacteria; when associated with W-36; W-38; R-40 and W-43." evidence="4">
    <original>F</original>
    <variation>W</variation>
    <location>
        <position position="37"/>
    </location>
</feature>
<feature type="mutagenesis site" description="In TetraF2W-RR; important increase in activity against both Gram-positive (including MRSA) and Gram-negative bacteria; when associated with W-36; W-37; R-40 and W-43." evidence="4">
    <original>F</original>
    <variation>W</variation>
    <location>
        <position position="38"/>
    </location>
</feature>
<feature type="mutagenesis site" description="In combination with F-37 chemically modified ([p-(t)BuF2, R5]SHf); important increase in activity against both Gram-positive and Gram-negative bacteria, small increase in cytotoxicity towards human cells, and no change in hemolytic activity. In TetraF2W-RR; important increase in activity against both Gram-positive (including MRSA) and Gram-negative bacteria; when associated with W-36; W-37; W-38 and W-43." evidence="3 4">
    <original>S</original>
    <variation>R</variation>
    <location>
        <position position="40"/>
    </location>
</feature>
<feature type="mutagenesis site" description="In TetraF2W-RR; important increase in activity against both Gram-positive (including MRSA) and Gram-negative bacteria; when associated with W-36; W-37; W-38 and R-40." evidence="4">
    <original>F</original>
    <variation>W</variation>
    <location>
        <position position="43"/>
    </location>
</feature>
<feature type="non-terminal residue" evidence="8">
    <location>
        <position position="1"/>
    </location>
</feature>
<organism>
    <name type="scientific">Pelophylax saharicus</name>
    <name type="common">Sahara frog</name>
    <name type="synonym">Rana saharica</name>
    <dbReference type="NCBI Taxonomy" id="70019"/>
    <lineage>
        <taxon>Eukaryota</taxon>
        <taxon>Metazoa</taxon>
        <taxon>Chordata</taxon>
        <taxon>Craniata</taxon>
        <taxon>Vertebrata</taxon>
        <taxon>Euteleostomi</taxon>
        <taxon>Amphibia</taxon>
        <taxon>Batrachia</taxon>
        <taxon>Anura</taxon>
        <taxon>Neobatrachia</taxon>
        <taxon>Ranoidea</taxon>
        <taxon>Ranidae</taxon>
        <taxon>Pelophylax</taxon>
    </lineage>
</organism>
<evidence type="ECO:0000250" key="1">
    <source>
        <dbReference type="UniProtKB" id="P79874"/>
    </source>
</evidence>
<evidence type="ECO:0000269" key="2">
    <source>
    </source>
</evidence>
<evidence type="ECO:0000269" key="3">
    <source>
    </source>
</evidence>
<evidence type="ECO:0000269" key="4">
    <source>
    </source>
</evidence>
<evidence type="ECO:0000303" key="5">
    <source>
    </source>
</evidence>
<evidence type="ECO:0000305" key="6">
    <source>
    </source>
</evidence>
<evidence type="ECO:0000305" key="7">
    <source>
    </source>
</evidence>
<evidence type="ECO:0000312" key="8">
    <source>
        <dbReference type="EMBL" id="CAP17489.1"/>
    </source>
</evidence>
<dbReference type="EMBL" id="AM903076">
    <property type="protein sequence ID" value="CAP17489.1"/>
    <property type="molecule type" value="mRNA"/>
</dbReference>
<dbReference type="SMR" id="D4YWD1"/>
<dbReference type="GO" id="GO:0005576">
    <property type="term" value="C:extracellular region"/>
    <property type="evidence" value="ECO:0007669"/>
    <property type="project" value="UniProtKB-SubCell"/>
</dbReference>
<dbReference type="GO" id="GO:0016020">
    <property type="term" value="C:membrane"/>
    <property type="evidence" value="ECO:0007669"/>
    <property type="project" value="UniProtKB-KW"/>
</dbReference>
<dbReference type="GO" id="GO:0044218">
    <property type="term" value="C:other organism cell membrane"/>
    <property type="evidence" value="ECO:0007669"/>
    <property type="project" value="UniProtKB-KW"/>
</dbReference>
<dbReference type="GO" id="GO:0042742">
    <property type="term" value="P:defense response to bacterium"/>
    <property type="evidence" value="ECO:0007669"/>
    <property type="project" value="UniProtKB-KW"/>
</dbReference>
<dbReference type="GO" id="GO:0045087">
    <property type="term" value="P:innate immune response"/>
    <property type="evidence" value="ECO:0007669"/>
    <property type="project" value="UniProtKB-KW"/>
</dbReference>
<dbReference type="GO" id="GO:0031640">
    <property type="term" value="P:killing of cells of another organism"/>
    <property type="evidence" value="ECO:0007669"/>
    <property type="project" value="UniProtKB-KW"/>
</dbReference>
<dbReference type="InterPro" id="IPR004275">
    <property type="entry name" value="Frog_antimicrobial_propeptide"/>
</dbReference>
<dbReference type="Pfam" id="PF03032">
    <property type="entry name" value="FSAP_sig_propep"/>
    <property type="match status" value="1"/>
</dbReference>
<protein>
    <recommendedName>
        <fullName evidence="5">Temporin-SHf</fullName>
        <shortName evidence="5">Temp-SHf</shortName>
    </recommendedName>
    <alternativeName>
        <fullName evidence="5">Phe-rich antimicrobial peptide</fullName>
    </alternativeName>
</protein>
<reference key="1">
    <citation type="journal article" date="2010" name="J. Biol. Chem.">
        <title>Temporin-SHf, a new type of phe-rich and hydrophobic ultrashort antimicrobial peptide.</title>
        <authorList>
            <person name="Abbassi F."/>
            <person name="Lequin O."/>
            <person name="Piesse C."/>
            <person name="Goasdoue N."/>
            <person name="Foulon T."/>
            <person name="Nicolas P."/>
            <person name="Ladram A."/>
        </authorList>
    </citation>
    <scope>NUCLEOTIDE SEQUENCE [MRNA]</scope>
    <scope>PROTEIN SEQUENCE OF 36-43</scope>
    <scope>FUNCTION</scope>
    <scope>SUBCELLULAR LOCATION</scope>
    <scope>AMIDATION AT PHE-43</scope>
    <scope>MASS SPECTROMETRY</scope>
    <scope>SYNTHESIS OF 36-43</scope>
    <scope>STRUCTURE BY NMR OF 36-43 IN DPC MICELLES</scope>
    <source>
        <tissue>Skin</tissue>
    </source>
</reference>
<reference key="2">
    <citation type="journal article" date="2015" name="ACS Chem. Biol.">
        <title>Structure-activity relationship-based optimization of small temporin-SHf analogs with potent antibacterial activity.</title>
        <authorList>
            <person name="Andre S."/>
            <person name="Washington S.K."/>
            <person name="Darby E."/>
            <person name="Vega M.M."/>
            <person name="Filip A.D."/>
            <person name="Ash N.S."/>
            <person name="Muzikar K.A."/>
            <person name="Piesse C."/>
            <person name="Foulon T."/>
            <person name="O'Leary D.J."/>
            <person name="Ladram A."/>
        </authorList>
    </citation>
    <scope>FUNCTION</scope>
    <scope>MUTAGENESIS OF SER-40</scope>
    <scope>PHARMACEUTICAL</scope>
</reference>
<reference key="3">
    <citation type="journal article" date="2017" name="Acta Biomater.">
        <title>Design and surface immobilization of short anti-biofilm peptides.</title>
        <authorList>
            <person name="Mishra B."/>
            <person name="Lushnikova T."/>
            <person name="Golla R.M."/>
            <person name="Wang X."/>
            <person name="Wang G."/>
        </authorList>
    </citation>
    <scope>FUNCTION</scope>
    <scope>BIOTECHNOLOGY</scope>
    <scope>MUTAGENESIS OF PHE-36; PHE-37; PHE-38; SER-40 AND PHE-43</scope>
</reference>
<sequence length="45" mass="5395">FLGTINLSLCEEERDADEEERRDEPDESNVEVKKRFFFLSRIFGK</sequence>
<comment type="function">
    <text evidence="2 3 4">Non-amphipathic alpha-helical antimicrobial peptide with potent activity against some Gram-positive bacteria (including methicillin-resistant Staphylococcus aureus (MRSA)), weak activity against Gram-negative bacteria and no activity against fungi (PubMed:20308076, PubMed:26181487, PubMed:27915018). Permeabilizates membranes through a detergent-like effect probably via the carpet mechanism (PubMed:20308076). More precisely, it strongly and selectively perturbs anionic bilayers membranes by interacting with the polar headgroups and the glycerol backbone region of the phospholipids, hence disrupting the acyl chain packing of the bilayer (PubMed:20308076). Is not active against Leishmania (promastigote and axenic amastigote forms) (PubMed:20308076). Does not show hemolytic activity (PubMed:20308076, PubMed:26181487). Does not show toxicity for human THP-1-derived macrophages (PubMed:26181487).</text>
</comment>
<comment type="subcellular location">
    <subcellularLocation>
        <location evidence="2">Secreted</location>
    </subcellularLocation>
    <subcellularLocation>
        <location evidence="2">Target cell membrane</location>
    </subcellularLocation>
    <text evidence="2">Inserts into the lipid bilayer with an in-plane (parallel) orientation.</text>
</comment>
<comment type="mass spectrometry" mass="1075.6" method="MALDI" evidence="2"/>
<comment type="biotechnology">
    <text evidence="7">Has potential application in preventing biofilm formation on medical devices, since it has the ability to prevent methicillin-resistant S.aureus biofilm formation on the polyethylene terephthalate (PET) surface, which is widely used in making prosthetic heart valves cuffs and other bio devices.</text>
</comment>
<comment type="pharmaceutical">
    <text evidence="3 5">Owing to its short length, simple composition, and broad spectrum of antimicrobial activity, this peptide is a promising candidate for the development of a new class of antibiotics (PubMed:20308076). The analog [p-(t)BuF(2), R5]SHf emerged as a highly potent bactericidal ultrashort peptide, but weakly or non-cytotoxic against mammalian cells (PubMed:26181487).</text>
</comment>
<comment type="similarity">
    <text evidence="6">Belongs to the frog skin active peptide (FSAP) family. Temporin subfamily.</text>
</comment>
<comment type="online information" name="The antimicrobial peptide database">
    <link uri="https://wangapd3.com/database/query_output.php?ID=01534"/>
</comment>
<accession>D4YWD1</accession>
<keyword id="KW-0027">Amidation</keyword>
<keyword id="KW-0878">Amphibian defense peptide</keyword>
<keyword id="KW-0044">Antibiotic</keyword>
<keyword id="KW-0929">Antimicrobial</keyword>
<keyword id="KW-0165">Cleavage on pair of basic residues</keyword>
<keyword id="KW-0204">Cytolysis</keyword>
<keyword id="KW-0903">Direct protein sequencing</keyword>
<keyword id="KW-0354">Hemolysis</keyword>
<keyword id="KW-0391">Immunity</keyword>
<keyword id="KW-0399">Innate immunity</keyword>
<keyword id="KW-0472">Membrane</keyword>
<keyword id="KW-0582">Pharmaceutical</keyword>
<keyword id="KW-0964">Secreted</keyword>
<keyword id="KW-0732">Signal</keyword>
<keyword id="KW-1052">Target cell membrane</keyword>
<keyword id="KW-1053">Target membrane</keyword>